<protein>
    <recommendedName>
        <fullName evidence="1">Cyanate hydratase</fullName>
        <shortName evidence="1">Cyanase</shortName>
        <ecNumber evidence="1">4.2.1.104</ecNumber>
    </recommendedName>
    <alternativeName>
        <fullName evidence="1">Cyanate hydrolase</fullName>
    </alternativeName>
    <alternativeName>
        <fullName evidence="1">Cyanate lyase</fullName>
    </alternativeName>
</protein>
<evidence type="ECO:0000255" key="1">
    <source>
        <dbReference type="HAMAP-Rule" id="MF_03139"/>
    </source>
</evidence>
<gene>
    <name evidence="1" type="primary">CYN</name>
    <name type="ordered locus">At3g23490</name>
    <name type="ORF">MEE5.3</name>
</gene>
<dbReference type="EC" id="4.2.1.104" evidence="1"/>
<dbReference type="EMBL" id="AB004568">
    <property type="protein sequence ID" value="BAA21660.1"/>
    <property type="molecule type" value="mRNA"/>
</dbReference>
<dbReference type="EMBL" id="AB015748">
    <property type="protein sequence ID" value="BAA31224.1"/>
    <property type="molecule type" value="Genomic_DNA"/>
</dbReference>
<dbReference type="EMBL" id="AP000374">
    <property type="protein sequence ID" value="BAB01741.1"/>
    <property type="molecule type" value="Genomic_DNA"/>
</dbReference>
<dbReference type="EMBL" id="CP002686">
    <property type="protein sequence ID" value="AEE76771.1"/>
    <property type="molecule type" value="Genomic_DNA"/>
</dbReference>
<dbReference type="EMBL" id="CP002686">
    <property type="protein sequence ID" value="ANM65955.1"/>
    <property type="molecule type" value="Genomic_DNA"/>
</dbReference>
<dbReference type="EMBL" id="AF410298">
    <property type="protein sequence ID" value="AAK95284.1"/>
    <property type="molecule type" value="mRNA"/>
</dbReference>
<dbReference type="EMBL" id="AY093708">
    <property type="protein sequence ID" value="AAM10332.1"/>
    <property type="molecule type" value="mRNA"/>
</dbReference>
<dbReference type="RefSeq" id="NP_001327887.1">
    <property type="nucleotide sequence ID" value="NM_001338643.1"/>
</dbReference>
<dbReference type="RefSeq" id="NP_188991.1">
    <property type="nucleotide sequence ID" value="NM_113252.4"/>
</dbReference>
<dbReference type="SMR" id="O22683"/>
<dbReference type="BioGRID" id="7262">
    <property type="interactions" value="1"/>
</dbReference>
<dbReference type="FunCoup" id="O22683">
    <property type="interactions" value="933"/>
</dbReference>
<dbReference type="STRING" id="3702.O22683"/>
<dbReference type="iPTMnet" id="O22683"/>
<dbReference type="PaxDb" id="3702-AT3G23490.1"/>
<dbReference type="ProteomicsDB" id="222670"/>
<dbReference type="EnsemblPlants" id="AT3G23490.1">
    <property type="protein sequence ID" value="AT3G23490.1"/>
    <property type="gene ID" value="AT3G23490"/>
</dbReference>
<dbReference type="EnsemblPlants" id="AT3G23490.2">
    <property type="protein sequence ID" value="AT3G23490.2"/>
    <property type="gene ID" value="AT3G23490"/>
</dbReference>
<dbReference type="GeneID" id="821930"/>
<dbReference type="Gramene" id="AT3G23490.1">
    <property type="protein sequence ID" value="AT3G23490.1"/>
    <property type="gene ID" value="AT3G23490"/>
</dbReference>
<dbReference type="Gramene" id="AT3G23490.2">
    <property type="protein sequence ID" value="AT3G23490.2"/>
    <property type="gene ID" value="AT3G23490"/>
</dbReference>
<dbReference type="KEGG" id="ath:AT3G23490"/>
<dbReference type="Araport" id="AT3G23490"/>
<dbReference type="TAIR" id="AT3G23490">
    <property type="gene designation" value="CYN"/>
</dbReference>
<dbReference type="eggNOG" id="ENOG502S3I5">
    <property type="taxonomic scope" value="Eukaryota"/>
</dbReference>
<dbReference type="HOGENOM" id="CLU_103452_2_0_1"/>
<dbReference type="InParanoid" id="O22683"/>
<dbReference type="OMA" id="YELVMIN"/>
<dbReference type="OrthoDB" id="10019422at2759"/>
<dbReference type="PhylomeDB" id="O22683"/>
<dbReference type="BioCyc" id="ARA:AT3G23490-MONOMER"/>
<dbReference type="BioCyc" id="MetaCyc:AT3G23490-MONOMER"/>
<dbReference type="BRENDA" id="4.2.1.104">
    <property type="organism ID" value="399"/>
</dbReference>
<dbReference type="CD-CODE" id="4299E36E">
    <property type="entry name" value="Nucleolus"/>
</dbReference>
<dbReference type="PRO" id="PR:O22683"/>
<dbReference type="Proteomes" id="UP000006548">
    <property type="component" value="Chromosome 3"/>
</dbReference>
<dbReference type="ExpressionAtlas" id="O22683">
    <property type="expression patterns" value="baseline and differential"/>
</dbReference>
<dbReference type="GO" id="GO:0005829">
    <property type="term" value="C:cytosol"/>
    <property type="evidence" value="ECO:0007005"/>
    <property type="project" value="TAIR"/>
</dbReference>
<dbReference type="GO" id="GO:0008824">
    <property type="term" value="F:cyanate hydratase activity"/>
    <property type="evidence" value="ECO:0000314"/>
    <property type="project" value="TAIR"/>
</dbReference>
<dbReference type="GO" id="GO:0003677">
    <property type="term" value="F:DNA binding"/>
    <property type="evidence" value="ECO:0007669"/>
    <property type="project" value="InterPro"/>
</dbReference>
<dbReference type="GO" id="GO:0042802">
    <property type="term" value="F:identical protein binding"/>
    <property type="evidence" value="ECO:0000353"/>
    <property type="project" value="TAIR"/>
</dbReference>
<dbReference type="GO" id="GO:0009440">
    <property type="term" value="P:cyanate catabolic process"/>
    <property type="evidence" value="ECO:0000315"/>
    <property type="project" value="TAIR"/>
</dbReference>
<dbReference type="GO" id="GO:0009651">
    <property type="term" value="P:response to salt stress"/>
    <property type="evidence" value="ECO:0000270"/>
    <property type="project" value="TAIR"/>
</dbReference>
<dbReference type="CDD" id="cd00559">
    <property type="entry name" value="Cyanase_C"/>
    <property type="match status" value="1"/>
</dbReference>
<dbReference type="FunFam" id="1.10.260.40:FF:000046">
    <property type="entry name" value="Cyanate hydratase"/>
    <property type="match status" value="1"/>
</dbReference>
<dbReference type="FunFam" id="3.30.1160.10:FF:000002">
    <property type="entry name" value="Cyanate hydratase"/>
    <property type="match status" value="1"/>
</dbReference>
<dbReference type="Gene3D" id="3.30.1160.10">
    <property type="entry name" value="Cyanate lyase, C-terminal domain"/>
    <property type="match status" value="1"/>
</dbReference>
<dbReference type="Gene3D" id="1.10.260.40">
    <property type="entry name" value="lambda repressor-like DNA-binding domains"/>
    <property type="match status" value="1"/>
</dbReference>
<dbReference type="HAMAP" id="MF_00535">
    <property type="entry name" value="Cyanate_hydrat"/>
    <property type="match status" value="1"/>
</dbReference>
<dbReference type="InterPro" id="IPR008076">
    <property type="entry name" value="Cyanase"/>
</dbReference>
<dbReference type="InterPro" id="IPR003712">
    <property type="entry name" value="Cyanate_lyase_C"/>
</dbReference>
<dbReference type="InterPro" id="IPR036581">
    <property type="entry name" value="Cyanate_lyase_C_sf"/>
</dbReference>
<dbReference type="InterPro" id="IPR010982">
    <property type="entry name" value="Lambda_DNA-bd_dom_sf"/>
</dbReference>
<dbReference type="NCBIfam" id="TIGR00673">
    <property type="entry name" value="cynS"/>
    <property type="match status" value="1"/>
</dbReference>
<dbReference type="PANTHER" id="PTHR34186">
    <property type="entry name" value="CYANATE HYDRATASE"/>
    <property type="match status" value="1"/>
</dbReference>
<dbReference type="PANTHER" id="PTHR34186:SF2">
    <property type="entry name" value="CYANATE HYDRATASE"/>
    <property type="match status" value="1"/>
</dbReference>
<dbReference type="Pfam" id="PF02560">
    <property type="entry name" value="Cyanate_lyase"/>
    <property type="match status" value="1"/>
</dbReference>
<dbReference type="PIRSF" id="PIRSF001263">
    <property type="entry name" value="Cyanate_hydratas"/>
    <property type="match status" value="1"/>
</dbReference>
<dbReference type="PRINTS" id="PR01693">
    <property type="entry name" value="CYANASE"/>
</dbReference>
<dbReference type="SMART" id="SM01116">
    <property type="entry name" value="Cyanate_lyase"/>
    <property type="match status" value="1"/>
</dbReference>
<dbReference type="SUPFAM" id="SSF55234">
    <property type="entry name" value="Cyanase C-terminal domain"/>
    <property type="match status" value="1"/>
</dbReference>
<dbReference type="SUPFAM" id="SSF47413">
    <property type="entry name" value="lambda repressor-like DNA-binding domains"/>
    <property type="match status" value="1"/>
</dbReference>
<proteinExistence type="evidence at transcript level"/>
<keyword id="KW-0456">Lyase</keyword>
<keyword id="KW-1185">Reference proteome</keyword>
<organism>
    <name type="scientific">Arabidopsis thaliana</name>
    <name type="common">Mouse-ear cress</name>
    <dbReference type="NCBI Taxonomy" id="3702"/>
    <lineage>
        <taxon>Eukaryota</taxon>
        <taxon>Viridiplantae</taxon>
        <taxon>Streptophyta</taxon>
        <taxon>Embryophyta</taxon>
        <taxon>Tracheophyta</taxon>
        <taxon>Spermatophyta</taxon>
        <taxon>Magnoliopsida</taxon>
        <taxon>eudicotyledons</taxon>
        <taxon>Gunneridae</taxon>
        <taxon>Pentapetalae</taxon>
        <taxon>rosids</taxon>
        <taxon>malvids</taxon>
        <taxon>Brassicales</taxon>
        <taxon>Brassicaceae</taxon>
        <taxon>Camelineae</taxon>
        <taxon>Arabidopsis</taxon>
    </lineage>
</organism>
<name>CYNS_ARATH</name>
<reference key="1">
    <citation type="submission" date="1997-06" db="EMBL/GenBank/DDBJ databases">
        <title>Molecular cloning and characterization of a cDNA encoding cyanase from Arabidopsis thaliana.</title>
        <authorList>
            <person name="Aichi M."/>
            <person name="Nishida I."/>
            <person name="Omata T."/>
        </authorList>
    </citation>
    <scope>NUCLEOTIDE SEQUENCE [MRNA]</scope>
</reference>
<reference key="2">
    <citation type="submission" date="1998-06" db="EMBL/GenBank/DDBJ databases">
        <title>Arabidopsis thaliana gene for cyanase.</title>
        <authorList>
            <person name="Aichi M."/>
            <person name="Nishida I."/>
            <person name="Omata T."/>
        </authorList>
    </citation>
    <scope>NUCLEOTIDE SEQUENCE [GENOMIC DNA]</scope>
    <source>
        <strain>cv. Columbia</strain>
    </source>
</reference>
<reference key="3">
    <citation type="journal article" date="2000" name="DNA Res.">
        <title>Structural analysis of Arabidopsis thaliana chromosome 3. II. Sequence features of the 4,251,695 bp regions covered by 90 P1, TAC and BAC clones.</title>
        <authorList>
            <person name="Kaneko T."/>
            <person name="Katoh T."/>
            <person name="Sato S."/>
            <person name="Nakamura Y."/>
            <person name="Asamizu E."/>
            <person name="Tabata S."/>
        </authorList>
    </citation>
    <scope>NUCLEOTIDE SEQUENCE [LARGE SCALE GENOMIC DNA]</scope>
    <source>
        <strain>cv. Columbia</strain>
    </source>
</reference>
<reference key="4">
    <citation type="journal article" date="2017" name="Plant J.">
        <title>Araport11: a complete reannotation of the Arabidopsis thaliana reference genome.</title>
        <authorList>
            <person name="Cheng C.Y."/>
            <person name="Krishnakumar V."/>
            <person name="Chan A.P."/>
            <person name="Thibaud-Nissen F."/>
            <person name="Schobel S."/>
            <person name="Town C.D."/>
        </authorList>
    </citation>
    <scope>GENOME REANNOTATION</scope>
    <source>
        <strain>cv. Columbia</strain>
    </source>
</reference>
<reference key="5">
    <citation type="journal article" date="2003" name="Science">
        <title>Empirical analysis of transcriptional activity in the Arabidopsis genome.</title>
        <authorList>
            <person name="Yamada K."/>
            <person name="Lim J."/>
            <person name="Dale J.M."/>
            <person name="Chen H."/>
            <person name="Shinn P."/>
            <person name="Palm C.J."/>
            <person name="Southwick A.M."/>
            <person name="Wu H.C."/>
            <person name="Kim C.J."/>
            <person name="Nguyen M."/>
            <person name="Pham P.K."/>
            <person name="Cheuk R.F."/>
            <person name="Karlin-Newmann G."/>
            <person name="Liu S.X."/>
            <person name="Lam B."/>
            <person name="Sakano H."/>
            <person name="Wu T."/>
            <person name="Yu G."/>
            <person name="Miranda M."/>
            <person name="Quach H.L."/>
            <person name="Tripp M."/>
            <person name="Chang C.H."/>
            <person name="Lee J.M."/>
            <person name="Toriumi M.J."/>
            <person name="Chan M.M."/>
            <person name="Tang C.C."/>
            <person name="Onodera C.S."/>
            <person name="Deng J.M."/>
            <person name="Akiyama K."/>
            <person name="Ansari Y."/>
            <person name="Arakawa T."/>
            <person name="Banh J."/>
            <person name="Banno F."/>
            <person name="Bowser L."/>
            <person name="Brooks S.Y."/>
            <person name="Carninci P."/>
            <person name="Chao Q."/>
            <person name="Choy N."/>
            <person name="Enju A."/>
            <person name="Goldsmith A.D."/>
            <person name="Gurjal M."/>
            <person name="Hansen N.F."/>
            <person name="Hayashizaki Y."/>
            <person name="Johnson-Hopson C."/>
            <person name="Hsuan V.W."/>
            <person name="Iida K."/>
            <person name="Karnes M."/>
            <person name="Khan S."/>
            <person name="Koesema E."/>
            <person name="Ishida J."/>
            <person name="Jiang P.X."/>
            <person name="Jones T."/>
            <person name="Kawai J."/>
            <person name="Kamiya A."/>
            <person name="Meyers C."/>
            <person name="Nakajima M."/>
            <person name="Narusaka M."/>
            <person name="Seki M."/>
            <person name="Sakurai T."/>
            <person name="Satou M."/>
            <person name="Tamse R."/>
            <person name="Vaysberg M."/>
            <person name="Wallender E.K."/>
            <person name="Wong C."/>
            <person name="Yamamura Y."/>
            <person name="Yuan S."/>
            <person name="Shinozaki K."/>
            <person name="Davis R.W."/>
            <person name="Theologis A."/>
            <person name="Ecker J.R."/>
        </authorList>
    </citation>
    <scope>NUCLEOTIDE SEQUENCE [LARGE SCALE MRNA]</scope>
    <source>
        <strain>cv. Columbia</strain>
    </source>
</reference>
<accession>O22683</accession>
<feature type="chain" id="PRO_0000187534" description="Cyanate hydratase">
    <location>
        <begin position="1"/>
        <end position="168"/>
    </location>
</feature>
<feature type="active site" evidence="1">
    <location>
        <position position="91"/>
    </location>
</feature>
<feature type="active site" evidence="1">
    <location>
        <position position="94"/>
    </location>
</feature>
<feature type="active site" evidence="1">
    <location>
        <position position="117"/>
    </location>
</feature>
<sequence>MEAAKKQSVTNQLLAVKSASGKTFSQLAAETGLTNVYVAQLLRRQAQLKPDTVPKLKEALPALTDELIGDMMSPPWRSYDPNLIQEPTIYRLNEAVMHFGESIKEIINEDFGDGIMSAIDFYCSVDKIKGVDGNNRVVVTLDGKYLSHSEQRTENMVSRLNLKGGTSE</sequence>
<comment type="function">
    <text evidence="1">Catalyzes the reaction of cyanate with bicarbonate to produce ammonia and carbon dioxide.</text>
</comment>
<comment type="catalytic activity">
    <reaction evidence="1">
        <text>cyanate + hydrogencarbonate + 3 H(+) = NH4(+) + 2 CO2</text>
        <dbReference type="Rhea" id="RHEA:11120"/>
        <dbReference type="ChEBI" id="CHEBI:15378"/>
        <dbReference type="ChEBI" id="CHEBI:16526"/>
        <dbReference type="ChEBI" id="CHEBI:17544"/>
        <dbReference type="ChEBI" id="CHEBI:28938"/>
        <dbReference type="ChEBI" id="CHEBI:29195"/>
        <dbReference type="EC" id="4.2.1.104"/>
    </reaction>
</comment>
<comment type="similarity">
    <text evidence="1">Belongs to the cyanase family.</text>
</comment>